<comment type="function">
    <text evidence="1">One of the primary rRNA binding proteins, it binds directly to 16S rRNA where it helps nucleate assembly of the platform of the 30S subunit by binding and bridging several RNA helices of the 16S rRNA.</text>
</comment>
<comment type="function">
    <text evidence="1">Forms an intersubunit bridge (bridge B4) with the 23S rRNA of the 50S subunit in the ribosome.</text>
</comment>
<comment type="subunit">
    <text evidence="1">Part of the 30S ribosomal subunit. Forms a bridge to the 50S subunit in the 70S ribosome, contacting the 23S rRNA.</text>
</comment>
<comment type="similarity">
    <text evidence="1">Belongs to the universal ribosomal protein uS15 family.</text>
</comment>
<gene>
    <name evidence="1" type="primary">rpsO</name>
    <name type="ordered locus">COSY_0279</name>
</gene>
<proteinExistence type="inferred from homology"/>
<sequence length="86" mass="10042">MSINIQEIIKEYQSKIGDTGSTNVQVALLTARIRHLTKHFKTHKKDHHSRRGLLHLVSQRKKLLTYLRGNNKTAYSKLISHLELRK</sequence>
<dbReference type="EMBL" id="AP009247">
    <property type="protein sequence ID" value="BAF61408.1"/>
    <property type="molecule type" value="Genomic_DNA"/>
</dbReference>
<dbReference type="RefSeq" id="WP_011929678.1">
    <property type="nucleotide sequence ID" value="NC_009465.1"/>
</dbReference>
<dbReference type="SMR" id="A5CXD1"/>
<dbReference type="STRING" id="412965.COSY_0279"/>
<dbReference type="KEGG" id="vok:COSY_0279"/>
<dbReference type="eggNOG" id="COG0184">
    <property type="taxonomic scope" value="Bacteria"/>
</dbReference>
<dbReference type="HOGENOM" id="CLU_148518_1_0_6"/>
<dbReference type="OrthoDB" id="9799262at2"/>
<dbReference type="Proteomes" id="UP000000247">
    <property type="component" value="Chromosome"/>
</dbReference>
<dbReference type="GO" id="GO:0005737">
    <property type="term" value="C:cytoplasm"/>
    <property type="evidence" value="ECO:0007669"/>
    <property type="project" value="UniProtKB-ARBA"/>
</dbReference>
<dbReference type="GO" id="GO:1990904">
    <property type="term" value="C:ribonucleoprotein complex"/>
    <property type="evidence" value="ECO:0007669"/>
    <property type="project" value="UniProtKB-KW"/>
</dbReference>
<dbReference type="GO" id="GO:0005840">
    <property type="term" value="C:ribosome"/>
    <property type="evidence" value="ECO:0007669"/>
    <property type="project" value="UniProtKB-KW"/>
</dbReference>
<dbReference type="GO" id="GO:0019843">
    <property type="term" value="F:rRNA binding"/>
    <property type="evidence" value="ECO:0007669"/>
    <property type="project" value="UniProtKB-UniRule"/>
</dbReference>
<dbReference type="GO" id="GO:0003735">
    <property type="term" value="F:structural constituent of ribosome"/>
    <property type="evidence" value="ECO:0007669"/>
    <property type="project" value="InterPro"/>
</dbReference>
<dbReference type="GO" id="GO:0006412">
    <property type="term" value="P:translation"/>
    <property type="evidence" value="ECO:0007669"/>
    <property type="project" value="UniProtKB-UniRule"/>
</dbReference>
<dbReference type="CDD" id="cd00353">
    <property type="entry name" value="Ribosomal_S15p_S13e"/>
    <property type="match status" value="1"/>
</dbReference>
<dbReference type="FunFam" id="1.10.287.10:FF:000002">
    <property type="entry name" value="30S ribosomal protein S15"/>
    <property type="match status" value="1"/>
</dbReference>
<dbReference type="Gene3D" id="6.10.250.3130">
    <property type="match status" value="1"/>
</dbReference>
<dbReference type="Gene3D" id="1.10.287.10">
    <property type="entry name" value="S15/NS1, RNA-binding"/>
    <property type="match status" value="1"/>
</dbReference>
<dbReference type="HAMAP" id="MF_01343_B">
    <property type="entry name" value="Ribosomal_uS15_B"/>
    <property type="match status" value="1"/>
</dbReference>
<dbReference type="InterPro" id="IPR000589">
    <property type="entry name" value="Ribosomal_uS15"/>
</dbReference>
<dbReference type="InterPro" id="IPR005290">
    <property type="entry name" value="Ribosomal_uS15_bac-type"/>
</dbReference>
<dbReference type="InterPro" id="IPR009068">
    <property type="entry name" value="uS15_NS1_RNA-bd_sf"/>
</dbReference>
<dbReference type="NCBIfam" id="TIGR00952">
    <property type="entry name" value="S15_bact"/>
    <property type="match status" value="1"/>
</dbReference>
<dbReference type="PANTHER" id="PTHR23321">
    <property type="entry name" value="RIBOSOMAL PROTEIN S15, BACTERIAL AND ORGANELLAR"/>
    <property type="match status" value="1"/>
</dbReference>
<dbReference type="PANTHER" id="PTHR23321:SF26">
    <property type="entry name" value="SMALL RIBOSOMAL SUBUNIT PROTEIN US15M"/>
    <property type="match status" value="1"/>
</dbReference>
<dbReference type="Pfam" id="PF00312">
    <property type="entry name" value="Ribosomal_S15"/>
    <property type="match status" value="1"/>
</dbReference>
<dbReference type="SMART" id="SM01387">
    <property type="entry name" value="Ribosomal_S15"/>
    <property type="match status" value="1"/>
</dbReference>
<dbReference type="SUPFAM" id="SSF47060">
    <property type="entry name" value="S15/NS1 RNA-binding domain"/>
    <property type="match status" value="1"/>
</dbReference>
<dbReference type="PROSITE" id="PS00362">
    <property type="entry name" value="RIBOSOMAL_S15"/>
    <property type="match status" value="1"/>
</dbReference>
<name>RS15_VESOH</name>
<organism>
    <name type="scientific">Vesicomyosocius okutanii subsp. Calyptogena okutanii (strain HA)</name>
    <dbReference type="NCBI Taxonomy" id="412965"/>
    <lineage>
        <taxon>Bacteria</taxon>
        <taxon>Pseudomonadati</taxon>
        <taxon>Pseudomonadota</taxon>
        <taxon>Gammaproteobacteria</taxon>
        <taxon>Candidatus Pseudothioglobaceae</taxon>
        <taxon>Candidatus Vesicomyosocius</taxon>
    </lineage>
</organism>
<evidence type="ECO:0000255" key="1">
    <source>
        <dbReference type="HAMAP-Rule" id="MF_01343"/>
    </source>
</evidence>
<evidence type="ECO:0000305" key="2"/>
<reference key="1">
    <citation type="journal article" date="2007" name="Curr. Biol.">
        <title>Reduced genome of the thioautotrophic intracellular symbiont in a deep-sea clam, Calyptogena okutanii.</title>
        <authorList>
            <person name="Kuwahara H."/>
            <person name="Yoshida T."/>
            <person name="Takaki Y."/>
            <person name="Shimamura S."/>
            <person name="Nishi S."/>
            <person name="Harada M."/>
            <person name="Matsuyama K."/>
            <person name="Takishita K."/>
            <person name="Kawato M."/>
            <person name="Uematsu K."/>
            <person name="Fujiwara Y."/>
            <person name="Sato T."/>
            <person name="Kato C."/>
            <person name="Kitagawa M."/>
            <person name="Kato I."/>
            <person name="Maruyama T."/>
        </authorList>
    </citation>
    <scope>NUCLEOTIDE SEQUENCE [LARGE SCALE GENOMIC DNA]</scope>
    <source>
        <strain>HA</strain>
    </source>
</reference>
<protein>
    <recommendedName>
        <fullName evidence="1">Small ribosomal subunit protein uS15</fullName>
    </recommendedName>
    <alternativeName>
        <fullName evidence="2">30S ribosomal protein S15</fullName>
    </alternativeName>
</protein>
<feature type="chain" id="PRO_0000354221" description="Small ribosomal subunit protein uS15">
    <location>
        <begin position="1"/>
        <end position="86"/>
    </location>
</feature>
<accession>A5CXD1</accession>
<keyword id="KW-1185">Reference proteome</keyword>
<keyword id="KW-0687">Ribonucleoprotein</keyword>
<keyword id="KW-0689">Ribosomal protein</keyword>
<keyword id="KW-0694">RNA-binding</keyword>
<keyword id="KW-0699">rRNA-binding</keyword>